<proteinExistence type="inferred from homology"/>
<feature type="chain" id="PRO_0000459122" description="Holliday junction branch migration ATPase PINA">
    <location>
        <begin position="1"/>
        <end position="510"/>
    </location>
</feature>
<evidence type="ECO:0000250" key="1">
    <source>
        <dbReference type="UniProtKB" id="F0NID4"/>
    </source>
</evidence>
<evidence type="ECO:0000250" key="2">
    <source>
        <dbReference type="UniProtKB" id="Q5M2B1"/>
    </source>
</evidence>
<evidence type="ECO:0000269" key="3">
    <source>
    </source>
</evidence>
<evidence type="ECO:0000303" key="4">
    <source>
    </source>
</evidence>
<evidence type="ECO:0000305" key="5"/>
<evidence type="ECO:0000312" key="6">
    <source>
        <dbReference type="EMBL" id="AAY80870.1"/>
    </source>
</evidence>
<reference evidence="6" key="1">
    <citation type="journal article" date="2005" name="J. Bacteriol.">
        <title>The genome of Sulfolobus acidocaldarius, a model organism of the Crenarchaeota.</title>
        <authorList>
            <person name="Chen L."/>
            <person name="Bruegger K."/>
            <person name="Skovgaard M."/>
            <person name="Redder P."/>
            <person name="She Q."/>
            <person name="Torarinsson E."/>
            <person name="Greve B."/>
            <person name="Awayez M."/>
            <person name="Zibat A."/>
            <person name="Klenk H.-P."/>
            <person name="Garrett R.A."/>
        </authorList>
    </citation>
    <scope>NUCLEOTIDE SEQUENCE [LARGE SCALE GENOMIC DNA]</scope>
    <source>
        <strain>ATCC 33909 / DSM 639 / JCM 8929 / NBRC 15157 / NCIMB 11770</strain>
    </source>
</reference>
<reference key="2">
    <citation type="journal article" date="2022" name="Int. J. Mol. Sci.">
        <title>Genetic Study of Four Candidate Holliday Junction Processing Proteins in the Thermophilic Crenarchaeon Sulfolobus acidocaldarius.</title>
        <authorList>
            <person name="Matsuda R."/>
            <person name="Suzuki S."/>
            <person name="Kurosawa N."/>
        </authorList>
    </citation>
    <scope>FUNCTION</scope>
    <scope>DISRUPTION PHENOTYPE</scope>
    <source>
        <strain>MR31 / DP-1</strain>
    </source>
</reference>
<keyword id="KW-0067">ATP-binding</keyword>
<keyword id="KW-0227">DNA damage</keyword>
<keyword id="KW-0233">DNA recombination</keyword>
<keyword id="KW-0234">DNA repair</keyword>
<keyword id="KW-0238">DNA-binding</keyword>
<keyword id="KW-0378">Hydrolase</keyword>
<keyword id="KW-0547">Nucleotide-binding</keyword>
<keyword id="KW-1185">Reference proteome</keyword>
<sequence>MPARDLLPDKSALLHGLSKYIENRTIYGNILIHKRLLEDLEREAKEGLVTAEIALDEVKRLKEISENLLVSFEIVNSENLHGSLNGVLRDYCLSRKCTIVTTDEIQKKLSESLNIDVVLLQPSQTELEIEKMFDETTMSVHLKEGVTPKAKKGKPGSWQFVELLSNPLTSTDIKRVVNEILSSVNYVKDSFIEIERKGSTIVQLGNYRVVIIRPPLSDGWEVTITRPVVKKKLEEYNMDEKLLKRLRDKAEGILIAGSPGMGKTTFAQALAEFYTRMNKVVKTIESPRDMHLPPEVTQYSKNYAEVGELHDILLLSRPDYTVYDEMRNDEDFKLYIDLRLAGIGMIGVVHATSPIDAIHRFINRIDIGTIPNILDTVVFINSGNVAKVYGLDITVKVPTGLKEADLARPVVEVKDLISDKAEYEIYVFGEQTMIVPVKNLQTNSTQRRLESMINNIIPSASISFENGEYIITIPRDEIGMFNKKVVSKLKKYEKKYKIKIRVRFPDEDTT</sequence>
<protein>
    <recommendedName>
        <fullName evidence="5">Holliday junction branch migration ATPase PINA</fullName>
        <shortName evidence="4">PIN domain-containing ATPase</shortName>
        <shortName evidence="4">PINA</shortName>
        <ecNumber evidence="1">3.6.4.12</ecNumber>
    </recommendedName>
</protein>
<dbReference type="EC" id="3.6.4.12" evidence="1"/>
<dbReference type="EMBL" id="CP000077">
    <property type="protein sequence ID" value="AAY80870.1"/>
    <property type="molecule type" value="Genomic_DNA"/>
</dbReference>
<dbReference type="RefSeq" id="WP_011278372.1">
    <property type="nucleotide sequence ID" value="NC_007181.1"/>
</dbReference>
<dbReference type="SMR" id="Q4J8K8"/>
<dbReference type="STRING" id="330779.Saci_1557"/>
<dbReference type="GeneID" id="14552050"/>
<dbReference type="KEGG" id="sai:Saci_1557"/>
<dbReference type="PATRIC" id="fig|330779.12.peg.1497"/>
<dbReference type="eggNOG" id="arCOG04116">
    <property type="taxonomic scope" value="Archaea"/>
</dbReference>
<dbReference type="HOGENOM" id="CLU_023387_0_0_2"/>
<dbReference type="Proteomes" id="UP000001018">
    <property type="component" value="Chromosome"/>
</dbReference>
<dbReference type="GO" id="GO:0005524">
    <property type="term" value="F:ATP binding"/>
    <property type="evidence" value="ECO:0007669"/>
    <property type="project" value="UniProtKB-KW"/>
</dbReference>
<dbReference type="GO" id="GO:0016887">
    <property type="term" value="F:ATP hydrolysis activity"/>
    <property type="evidence" value="ECO:0007669"/>
    <property type="project" value="InterPro"/>
</dbReference>
<dbReference type="GO" id="GO:0003677">
    <property type="term" value="F:DNA binding"/>
    <property type="evidence" value="ECO:0007669"/>
    <property type="project" value="UniProtKB-KW"/>
</dbReference>
<dbReference type="GO" id="GO:0006310">
    <property type="term" value="P:DNA recombination"/>
    <property type="evidence" value="ECO:0007669"/>
    <property type="project" value="UniProtKB-KW"/>
</dbReference>
<dbReference type="GO" id="GO:0006281">
    <property type="term" value="P:DNA repair"/>
    <property type="evidence" value="ECO:0007669"/>
    <property type="project" value="UniProtKB-KW"/>
</dbReference>
<dbReference type="Gene3D" id="3.40.50.1010">
    <property type="entry name" value="5'-nuclease"/>
    <property type="match status" value="1"/>
</dbReference>
<dbReference type="Gene3D" id="3.40.50.300">
    <property type="entry name" value="P-loop containing nucleotide triphosphate hydrolases"/>
    <property type="match status" value="1"/>
</dbReference>
<dbReference type="InterPro" id="IPR003593">
    <property type="entry name" value="AAA+_ATPase"/>
</dbReference>
<dbReference type="InterPro" id="IPR052041">
    <property type="entry name" value="Nucleic_acid_metab_PIN/TRAM"/>
</dbReference>
<dbReference type="InterPro" id="IPR027417">
    <property type="entry name" value="P-loop_NTPase"/>
</dbReference>
<dbReference type="InterPro" id="IPR001482">
    <property type="entry name" value="T2SS/T4SS_dom"/>
</dbReference>
<dbReference type="NCBIfam" id="NF010335">
    <property type="entry name" value="PRK13764.1"/>
    <property type="match status" value="1"/>
</dbReference>
<dbReference type="PANTHER" id="PTHR11603">
    <property type="entry name" value="AAA FAMILY ATPASE"/>
    <property type="match status" value="1"/>
</dbReference>
<dbReference type="PANTHER" id="PTHR11603:SF147">
    <property type="entry name" value="MEMBRANE PROTEIN"/>
    <property type="match status" value="1"/>
</dbReference>
<dbReference type="Pfam" id="PF00437">
    <property type="entry name" value="T2SSE"/>
    <property type="match status" value="1"/>
</dbReference>
<dbReference type="SMART" id="SM00382">
    <property type="entry name" value="AAA"/>
    <property type="match status" value="1"/>
</dbReference>
<dbReference type="SUPFAM" id="SSF52540">
    <property type="entry name" value="P-loop containing nucleoside triphosphate hydrolases"/>
    <property type="match status" value="1"/>
</dbReference>
<gene>
    <name evidence="4" type="primary">pina</name>
    <name evidence="6" type="ordered locus">Saci_1557</name>
</gene>
<comment type="function">
    <text evidence="1 2 3">Important for growth at low temperatures (less than 65 degrees Celsius in this organism) (PubMed:35054893). Promotes Holliday junction (HJ) branch migration and unwinds Y-shaped DNA (but not replication forks or dsDNA) in an ATP hydrolysis-dependent manner. Stimulates cleavage by HJ resolvase Hjc. Hjc, Hjm (Hel308) and PINA coordinate HJ migration and cleavage of replication forks in a coordinated way (By similarity). Probably acts as an ATP-dependent pump that pulls DNA through the hexamer (By similarity).</text>
</comment>
<comment type="catalytic activity">
    <reaction evidence="1">
        <text>ATP + H2O = ADP + phosphate + H(+)</text>
        <dbReference type="Rhea" id="RHEA:13065"/>
        <dbReference type="ChEBI" id="CHEBI:15377"/>
        <dbReference type="ChEBI" id="CHEBI:15378"/>
        <dbReference type="ChEBI" id="CHEBI:30616"/>
        <dbReference type="ChEBI" id="CHEBI:43474"/>
        <dbReference type="ChEBI" id="CHEBI:456216"/>
        <dbReference type="EC" id="3.6.4.12"/>
    </reaction>
</comment>
<comment type="subunit">
    <text evidence="1">Homohexamer. Interacts with Holliday junction resolvase Hjc, interacts with helicase Hjm (Hel308).</text>
</comment>
<comment type="disruption phenotype">
    <text evidence="3">A single deletion is mildly cold-sensitive (growth at 55 Celsius versus 65 or 75 degrees). No change in sensitivity to mitomycin C. Double hjc-pina and hje-pina mutants grow more slowly at 55 degrees Celsius and do not grow to the same cell density as wild-type.</text>
</comment>
<accession>Q4J8K8</accession>
<name>PINA_SULAC</name>
<organism>
    <name type="scientific">Sulfolobus acidocaldarius (strain ATCC 33909 / DSM 639 / JCM 8929 / NBRC 15157 / NCIMB 11770)</name>
    <dbReference type="NCBI Taxonomy" id="330779"/>
    <lineage>
        <taxon>Archaea</taxon>
        <taxon>Thermoproteota</taxon>
        <taxon>Thermoprotei</taxon>
        <taxon>Sulfolobales</taxon>
        <taxon>Sulfolobaceae</taxon>
        <taxon>Sulfolobus</taxon>
    </lineage>
</organism>